<sequence length="274" mass="30333">MRAAGVGLVDCHCHLSAPDFDRDLDDVLEKAKKANVVALVAVAEHSGEFEKIMQLSERYNGFVLPCLGVHPVQGLPPEDQRSVTLKDLDVALPIIENYKDRLLAIGEVGLDFSPRFAGTGEQKEEQRQVLIRQIQLAKRLNLPVNVHSRSAGRPTINLLQEQGAEKVLLHAFDGRPSVAMEGVRAGYFFSIPPSIIRSGQKQKLVKQLPLTSICLETDSPALGPEKQVRNEPWNISISAEYIAQVKGISVEEVIEVTTQNALKLFPKLRHLLQK</sequence>
<proteinExistence type="evidence at protein level"/>
<protein>
    <recommendedName>
        <fullName>Deoxyribonuclease TATDN3</fullName>
        <ecNumber evidence="2">3.1.11.-</ecNumber>
        <ecNumber evidence="2">3.1.21.-</ecNumber>
    </recommendedName>
    <alternativeName>
        <fullName>DNA-(apurinic or apyrimidinic site) endonuclease TATDN3</fullName>
    </alternativeName>
    <alternativeName>
        <fullName evidence="7">TatD DNase domain containing 3</fullName>
    </alternativeName>
</protein>
<gene>
    <name type="primary">TATDN3</name>
</gene>
<feature type="chain" id="PRO_0000313595" description="Deoxyribonuclease TATDN3">
    <location>
        <begin position="1"/>
        <end position="274"/>
    </location>
</feature>
<feature type="binding site" evidence="3 8">
    <location>
        <position position="12"/>
    </location>
    <ligand>
        <name>Zn(2+)</name>
        <dbReference type="ChEBI" id="CHEBI:29105"/>
        <label>1</label>
    </ligand>
</feature>
<feature type="binding site" evidence="3 8">
    <location>
        <position position="14"/>
    </location>
    <ligand>
        <name>Zn(2+)</name>
        <dbReference type="ChEBI" id="CHEBI:29105"/>
        <label>1</label>
    </ligand>
</feature>
<feature type="binding site" evidence="3 8">
    <location>
        <position position="107"/>
    </location>
    <ligand>
        <name>Zn(2+)</name>
        <dbReference type="ChEBI" id="CHEBI:29105"/>
        <label>1</label>
    </ligand>
</feature>
<feature type="binding site" evidence="3 8">
    <location>
        <position position="107"/>
    </location>
    <ligand>
        <name>Zn(2+)</name>
        <dbReference type="ChEBI" id="CHEBI:29105"/>
        <label>2</label>
    </ligand>
</feature>
<feature type="binding site" evidence="3 8">
    <location>
        <position position="147"/>
    </location>
    <ligand>
        <name>Zn(2+)</name>
        <dbReference type="ChEBI" id="CHEBI:29105"/>
        <label>2</label>
    </ligand>
</feature>
<feature type="binding site" evidence="3 8">
    <location>
        <position position="170"/>
    </location>
    <ligand>
        <name>Zn(2+)</name>
        <dbReference type="ChEBI" id="CHEBI:29105"/>
        <label>2</label>
    </ligand>
</feature>
<feature type="binding site" evidence="3 8">
    <location>
        <position position="218"/>
    </location>
    <ligand>
        <name>Zn(2+)</name>
        <dbReference type="ChEBI" id="CHEBI:29105"/>
        <label>1</label>
    </ligand>
</feature>
<feature type="splice variant" id="VSP_045263" description="In isoform 4." evidence="4">
    <location>
        <begin position="87"/>
        <end position="107"/>
    </location>
</feature>
<feature type="splice variant" id="VSP_044448" description="In isoform 3 and isoform 5." evidence="4">
    <original>Q</original>
    <variation>QLLSLFSK</variation>
    <location>
        <position position="200"/>
    </location>
</feature>
<feature type="splice variant" id="VSP_030048" description="In isoform 2." evidence="5">
    <location>
        <position position="201"/>
    </location>
</feature>
<feature type="splice variant" id="VSP_045742" description="In isoform 5." evidence="6">
    <original>VRNEPWNISISAEYIAQVKGISVEEVIEVTTQNALKLFPKLRHLLQK</original>
    <variation>QNILPR</variation>
    <location>
        <begin position="228"/>
        <end position="274"/>
    </location>
</feature>
<feature type="mutagenesis site" description="Reduces AP endodeoxyribonuclease and 3'-exonuclease activities." evidence="2">
    <original>E</original>
    <variation>A</variation>
    <location>
        <position position="107"/>
    </location>
</feature>
<feature type="mutagenesis site" description="Increases both AP endodeoxyribonuclease and 3'-exonuclease activities." evidence="2">
    <original>E</original>
    <variation>Q</variation>
    <location>
        <position position="107"/>
    </location>
</feature>
<feature type="mutagenesis site" description="Reduces both AP endodeoxyribonuclease and 3'-exonuclease activities by 30-fold." evidence="2">
    <original>D</original>
    <variation>A</variation>
    <location>
        <position position="218"/>
    </location>
</feature>
<feature type="sequence conflict" description="In Ref. 1; BAH11457." evidence="6" ref="1">
    <original>K</original>
    <variation>R</variation>
    <location>
        <position position="86"/>
    </location>
</feature>
<feature type="sequence conflict" description="In Ref. 1; BAH11457." evidence="6" ref="1">
    <original>A</original>
    <variation>T</variation>
    <location>
        <position position="171"/>
    </location>
</feature>
<feature type="sequence conflict" description="In Ref. 1; BAH14214." evidence="6" ref="1">
    <original>E</original>
    <variation>G</variation>
    <location>
        <position position="231"/>
    </location>
</feature>
<feature type="strand" evidence="9">
    <location>
        <begin position="8"/>
        <end position="13"/>
    </location>
</feature>
<feature type="helix" evidence="9">
    <location>
        <begin position="18"/>
        <end position="20"/>
    </location>
</feature>
<feature type="turn" evidence="9">
    <location>
        <begin position="21"/>
        <end position="23"/>
    </location>
</feature>
<feature type="helix" evidence="9">
    <location>
        <begin position="24"/>
        <end position="33"/>
    </location>
</feature>
<feature type="strand" evidence="9">
    <location>
        <begin position="36"/>
        <end position="41"/>
    </location>
</feature>
<feature type="helix" evidence="9">
    <location>
        <begin position="46"/>
        <end position="48"/>
    </location>
</feature>
<feature type="helix" evidence="9">
    <location>
        <begin position="49"/>
        <end position="58"/>
    </location>
</feature>
<feature type="turn" evidence="9">
    <location>
        <begin position="59"/>
        <end position="62"/>
    </location>
</feature>
<feature type="strand" evidence="9">
    <location>
        <begin position="63"/>
        <end position="67"/>
    </location>
</feature>
<feature type="helix" evidence="9">
    <location>
        <begin position="85"/>
        <end position="98"/>
    </location>
</feature>
<feature type="helix" evidence="9">
    <location>
        <begin position="99"/>
        <end position="101"/>
    </location>
</feature>
<feature type="strand" evidence="9">
    <location>
        <begin position="103"/>
        <end position="109"/>
    </location>
</feature>
<feature type="turn" evidence="9">
    <location>
        <begin position="114"/>
        <end position="116"/>
    </location>
</feature>
<feature type="helix" evidence="9">
    <location>
        <begin position="120"/>
        <end position="140"/>
    </location>
</feature>
<feature type="strand" evidence="9">
    <location>
        <begin position="144"/>
        <end position="147"/>
    </location>
</feature>
<feature type="helix" evidence="9">
    <location>
        <begin position="152"/>
        <end position="161"/>
    </location>
</feature>
<feature type="strand" evidence="9">
    <location>
        <begin position="166"/>
        <end position="170"/>
    </location>
</feature>
<feature type="helix" evidence="9">
    <location>
        <begin position="176"/>
        <end position="184"/>
    </location>
</feature>
<feature type="strand" evidence="9">
    <location>
        <begin position="188"/>
        <end position="191"/>
    </location>
</feature>
<feature type="helix" evidence="9">
    <location>
        <begin position="193"/>
        <end position="196"/>
    </location>
</feature>
<feature type="helix" evidence="9">
    <location>
        <begin position="199"/>
        <end position="207"/>
    </location>
</feature>
<feature type="helix" evidence="9">
    <location>
        <begin position="210"/>
        <end position="212"/>
    </location>
</feature>
<feature type="strand" evidence="9">
    <location>
        <begin position="213"/>
        <end position="215"/>
    </location>
</feature>
<feature type="helix" evidence="9">
    <location>
        <begin position="232"/>
        <end position="234"/>
    </location>
</feature>
<feature type="helix" evidence="9">
    <location>
        <begin position="235"/>
        <end position="246"/>
    </location>
</feature>
<feature type="helix" evidence="9">
    <location>
        <begin position="250"/>
        <end position="264"/>
    </location>
</feature>
<feature type="helix" evidence="9">
    <location>
        <begin position="268"/>
        <end position="271"/>
    </location>
</feature>
<reference key="1">
    <citation type="journal article" date="2004" name="Nat. Genet.">
        <title>Complete sequencing and characterization of 21,243 full-length human cDNAs.</title>
        <authorList>
            <person name="Ota T."/>
            <person name="Suzuki Y."/>
            <person name="Nishikawa T."/>
            <person name="Otsuki T."/>
            <person name="Sugiyama T."/>
            <person name="Irie R."/>
            <person name="Wakamatsu A."/>
            <person name="Hayashi K."/>
            <person name="Sato H."/>
            <person name="Nagai K."/>
            <person name="Kimura K."/>
            <person name="Makita H."/>
            <person name="Sekine M."/>
            <person name="Obayashi M."/>
            <person name="Nishi T."/>
            <person name="Shibahara T."/>
            <person name="Tanaka T."/>
            <person name="Ishii S."/>
            <person name="Yamamoto J."/>
            <person name="Saito K."/>
            <person name="Kawai Y."/>
            <person name="Isono Y."/>
            <person name="Nakamura Y."/>
            <person name="Nagahari K."/>
            <person name="Murakami K."/>
            <person name="Yasuda T."/>
            <person name="Iwayanagi T."/>
            <person name="Wagatsuma M."/>
            <person name="Shiratori A."/>
            <person name="Sudo H."/>
            <person name="Hosoiri T."/>
            <person name="Kaku Y."/>
            <person name="Kodaira H."/>
            <person name="Kondo H."/>
            <person name="Sugawara M."/>
            <person name="Takahashi M."/>
            <person name="Kanda K."/>
            <person name="Yokoi T."/>
            <person name="Furuya T."/>
            <person name="Kikkawa E."/>
            <person name="Omura Y."/>
            <person name="Abe K."/>
            <person name="Kamihara K."/>
            <person name="Katsuta N."/>
            <person name="Sato K."/>
            <person name="Tanikawa M."/>
            <person name="Yamazaki M."/>
            <person name="Ninomiya K."/>
            <person name="Ishibashi T."/>
            <person name="Yamashita H."/>
            <person name="Murakawa K."/>
            <person name="Fujimori K."/>
            <person name="Tanai H."/>
            <person name="Kimata M."/>
            <person name="Watanabe M."/>
            <person name="Hiraoka S."/>
            <person name="Chiba Y."/>
            <person name="Ishida S."/>
            <person name="Ono Y."/>
            <person name="Takiguchi S."/>
            <person name="Watanabe S."/>
            <person name="Yosida M."/>
            <person name="Hotuta T."/>
            <person name="Kusano J."/>
            <person name="Kanehori K."/>
            <person name="Takahashi-Fujii A."/>
            <person name="Hara H."/>
            <person name="Tanase T.-O."/>
            <person name="Nomura Y."/>
            <person name="Togiya S."/>
            <person name="Komai F."/>
            <person name="Hara R."/>
            <person name="Takeuchi K."/>
            <person name="Arita M."/>
            <person name="Imose N."/>
            <person name="Musashino K."/>
            <person name="Yuuki H."/>
            <person name="Oshima A."/>
            <person name="Sasaki N."/>
            <person name="Aotsuka S."/>
            <person name="Yoshikawa Y."/>
            <person name="Matsunawa H."/>
            <person name="Ichihara T."/>
            <person name="Shiohata N."/>
            <person name="Sano S."/>
            <person name="Moriya S."/>
            <person name="Momiyama H."/>
            <person name="Satoh N."/>
            <person name="Takami S."/>
            <person name="Terashima Y."/>
            <person name="Suzuki O."/>
            <person name="Nakagawa S."/>
            <person name="Senoh A."/>
            <person name="Mizoguchi H."/>
            <person name="Goto Y."/>
            <person name="Shimizu F."/>
            <person name="Wakebe H."/>
            <person name="Hishigaki H."/>
            <person name="Watanabe T."/>
            <person name="Sugiyama A."/>
            <person name="Takemoto M."/>
            <person name="Kawakami B."/>
            <person name="Yamazaki M."/>
            <person name="Watanabe K."/>
            <person name="Kumagai A."/>
            <person name="Itakura S."/>
            <person name="Fukuzumi Y."/>
            <person name="Fujimori Y."/>
            <person name="Komiyama M."/>
            <person name="Tashiro H."/>
            <person name="Tanigami A."/>
            <person name="Fujiwara T."/>
            <person name="Ono T."/>
            <person name="Yamada K."/>
            <person name="Fujii Y."/>
            <person name="Ozaki K."/>
            <person name="Hirao M."/>
            <person name="Ohmori Y."/>
            <person name="Kawabata A."/>
            <person name="Hikiji T."/>
            <person name="Kobatake N."/>
            <person name="Inagaki H."/>
            <person name="Ikema Y."/>
            <person name="Okamoto S."/>
            <person name="Okitani R."/>
            <person name="Kawakami T."/>
            <person name="Noguchi S."/>
            <person name="Itoh T."/>
            <person name="Shigeta K."/>
            <person name="Senba T."/>
            <person name="Matsumura K."/>
            <person name="Nakajima Y."/>
            <person name="Mizuno T."/>
            <person name="Morinaga M."/>
            <person name="Sasaki M."/>
            <person name="Togashi T."/>
            <person name="Oyama M."/>
            <person name="Hata H."/>
            <person name="Watanabe M."/>
            <person name="Komatsu T."/>
            <person name="Mizushima-Sugano J."/>
            <person name="Satoh T."/>
            <person name="Shirai Y."/>
            <person name="Takahashi Y."/>
            <person name="Nakagawa K."/>
            <person name="Okumura K."/>
            <person name="Nagase T."/>
            <person name="Nomura N."/>
            <person name="Kikuchi H."/>
            <person name="Masuho Y."/>
            <person name="Yamashita R."/>
            <person name="Nakai K."/>
            <person name="Yada T."/>
            <person name="Nakamura Y."/>
            <person name="Ohara O."/>
            <person name="Isogai T."/>
            <person name="Sugano S."/>
        </authorList>
    </citation>
    <scope>NUCLEOTIDE SEQUENCE [LARGE SCALE MRNA] (ISOFORMS 3 AND 4)</scope>
    <source>
        <tissue>Uterus</tissue>
    </source>
</reference>
<reference key="2">
    <citation type="journal article" date="2006" name="Nature">
        <title>The DNA sequence and biological annotation of human chromosome 1.</title>
        <authorList>
            <person name="Gregory S.G."/>
            <person name="Barlow K.F."/>
            <person name="McLay K.E."/>
            <person name="Kaul R."/>
            <person name="Swarbreck D."/>
            <person name="Dunham A."/>
            <person name="Scott C.E."/>
            <person name="Howe K.L."/>
            <person name="Woodfine K."/>
            <person name="Spencer C.C.A."/>
            <person name="Jones M.C."/>
            <person name="Gillson C."/>
            <person name="Searle S."/>
            <person name="Zhou Y."/>
            <person name="Kokocinski F."/>
            <person name="McDonald L."/>
            <person name="Evans R."/>
            <person name="Phillips K."/>
            <person name="Atkinson A."/>
            <person name="Cooper R."/>
            <person name="Jones C."/>
            <person name="Hall R.E."/>
            <person name="Andrews T.D."/>
            <person name="Lloyd C."/>
            <person name="Ainscough R."/>
            <person name="Almeida J.P."/>
            <person name="Ambrose K.D."/>
            <person name="Anderson F."/>
            <person name="Andrew R.W."/>
            <person name="Ashwell R.I.S."/>
            <person name="Aubin K."/>
            <person name="Babbage A.K."/>
            <person name="Bagguley C.L."/>
            <person name="Bailey J."/>
            <person name="Beasley H."/>
            <person name="Bethel G."/>
            <person name="Bird C.P."/>
            <person name="Bray-Allen S."/>
            <person name="Brown J.Y."/>
            <person name="Brown A.J."/>
            <person name="Buckley D."/>
            <person name="Burton J."/>
            <person name="Bye J."/>
            <person name="Carder C."/>
            <person name="Chapman J.C."/>
            <person name="Clark S.Y."/>
            <person name="Clarke G."/>
            <person name="Clee C."/>
            <person name="Cobley V."/>
            <person name="Collier R.E."/>
            <person name="Corby N."/>
            <person name="Coville G.J."/>
            <person name="Davies J."/>
            <person name="Deadman R."/>
            <person name="Dunn M."/>
            <person name="Earthrowl M."/>
            <person name="Ellington A.G."/>
            <person name="Errington H."/>
            <person name="Frankish A."/>
            <person name="Frankland J."/>
            <person name="French L."/>
            <person name="Garner P."/>
            <person name="Garnett J."/>
            <person name="Gay L."/>
            <person name="Ghori M.R.J."/>
            <person name="Gibson R."/>
            <person name="Gilby L.M."/>
            <person name="Gillett W."/>
            <person name="Glithero R.J."/>
            <person name="Grafham D.V."/>
            <person name="Griffiths C."/>
            <person name="Griffiths-Jones S."/>
            <person name="Grocock R."/>
            <person name="Hammond S."/>
            <person name="Harrison E.S.I."/>
            <person name="Hart E."/>
            <person name="Haugen E."/>
            <person name="Heath P.D."/>
            <person name="Holmes S."/>
            <person name="Holt K."/>
            <person name="Howden P.J."/>
            <person name="Hunt A.R."/>
            <person name="Hunt S.E."/>
            <person name="Hunter G."/>
            <person name="Isherwood J."/>
            <person name="James R."/>
            <person name="Johnson C."/>
            <person name="Johnson D."/>
            <person name="Joy A."/>
            <person name="Kay M."/>
            <person name="Kershaw J.K."/>
            <person name="Kibukawa M."/>
            <person name="Kimberley A.M."/>
            <person name="King A."/>
            <person name="Knights A.J."/>
            <person name="Lad H."/>
            <person name="Laird G."/>
            <person name="Lawlor S."/>
            <person name="Leongamornlert D.A."/>
            <person name="Lloyd D.M."/>
            <person name="Loveland J."/>
            <person name="Lovell J."/>
            <person name="Lush M.J."/>
            <person name="Lyne R."/>
            <person name="Martin S."/>
            <person name="Mashreghi-Mohammadi M."/>
            <person name="Matthews L."/>
            <person name="Matthews N.S.W."/>
            <person name="McLaren S."/>
            <person name="Milne S."/>
            <person name="Mistry S."/>
            <person name="Moore M.J.F."/>
            <person name="Nickerson T."/>
            <person name="O'Dell C.N."/>
            <person name="Oliver K."/>
            <person name="Palmeiri A."/>
            <person name="Palmer S.A."/>
            <person name="Parker A."/>
            <person name="Patel D."/>
            <person name="Pearce A.V."/>
            <person name="Peck A.I."/>
            <person name="Pelan S."/>
            <person name="Phelps K."/>
            <person name="Phillimore B.J."/>
            <person name="Plumb R."/>
            <person name="Rajan J."/>
            <person name="Raymond C."/>
            <person name="Rouse G."/>
            <person name="Saenphimmachak C."/>
            <person name="Sehra H.K."/>
            <person name="Sheridan E."/>
            <person name="Shownkeen R."/>
            <person name="Sims S."/>
            <person name="Skuce C.D."/>
            <person name="Smith M."/>
            <person name="Steward C."/>
            <person name="Subramanian S."/>
            <person name="Sycamore N."/>
            <person name="Tracey A."/>
            <person name="Tromans A."/>
            <person name="Van Helmond Z."/>
            <person name="Wall M."/>
            <person name="Wallis J.M."/>
            <person name="White S."/>
            <person name="Whitehead S.L."/>
            <person name="Wilkinson J.E."/>
            <person name="Willey D.L."/>
            <person name="Williams H."/>
            <person name="Wilming L."/>
            <person name="Wray P.W."/>
            <person name="Wu Z."/>
            <person name="Coulson A."/>
            <person name="Vaudin M."/>
            <person name="Sulston J.E."/>
            <person name="Durbin R.M."/>
            <person name="Hubbard T."/>
            <person name="Wooster R."/>
            <person name="Dunham I."/>
            <person name="Carter N.P."/>
            <person name="McVean G."/>
            <person name="Ross M.T."/>
            <person name="Harrow J."/>
            <person name="Olson M.V."/>
            <person name="Beck S."/>
            <person name="Rogers J."/>
            <person name="Bentley D.R."/>
        </authorList>
    </citation>
    <scope>NUCLEOTIDE SEQUENCE [LARGE SCALE GENOMIC DNA]</scope>
</reference>
<reference key="3">
    <citation type="submission" date="2005-09" db="EMBL/GenBank/DDBJ databases">
        <authorList>
            <person name="Mural R.J."/>
            <person name="Istrail S."/>
            <person name="Sutton G.G."/>
            <person name="Florea L."/>
            <person name="Halpern A.L."/>
            <person name="Mobarry C.M."/>
            <person name="Lippert R."/>
            <person name="Walenz B."/>
            <person name="Shatkay H."/>
            <person name="Dew I."/>
            <person name="Miller J.R."/>
            <person name="Flanigan M.J."/>
            <person name="Edwards N.J."/>
            <person name="Bolanos R."/>
            <person name="Fasulo D."/>
            <person name="Halldorsson B.V."/>
            <person name="Hannenhalli S."/>
            <person name="Turner R."/>
            <person name="Yooseph S."/>
            <person name="Lu F."/>
            <person name="Nusskern D.R."/>
            <person name="Shue B.C."/>
            <person name="Zheng X.H."/>
            <person name="Zhong F."/>
            <person name="Delcher A.L."/>
            <person name="Huson D.H."/>
            <person name="Kravitz S.A."/>
            <person name="Mouchard L."/>
            <person name="Reinert K."/>
            <person name="Remington K.A."/>
            <person name="Clark A.G."/>
            <person name="Waterman M.S."/>
            <person name="Eichler E.E."/>
            <person name="Adams M.D."/>
            <person name="Hunkapiller M.W."/>
            <person name="Myers E.W."/>
            <person name="Venter J.C."/>
        </authorList>
    </citation>
    <scope>NUCLEOTIDE SEQUENCE [LARGE SCALE GENOMIC DNA]</scope>
</reference>
<reference key="4">
    <citation type="journal article" date="2004" name="Genome Res.">
        <title>The status, quality, and expansion of the NIH full-length cDNA project: the Mammalian Gene Collection (MGC).</title>
        <authorList>
            <consortium name="The MGC Project Team"/>
        </authorList>
    </citation>
    <scope>NUCLEOTIDE SEQUENCE [LARGE SCALE MRNA] (ISOFORMS 1 AND 2)</scope>
    <source>
        <tissue>Brain</tissue>
    </source>
</reference>
<reference key="5">
    <citation type="journal article" date="2011" name="BMC Syst. Biol.">
        <title>Initial characterization of the human central proteome.</title>
        <authorList>
            <person name="Burkard T.R."/>
            <person name="Planyavsky M."/>
            <person name="Kaupe I."/>
            <person name="Breitwieser F.P."/>
            <person name="Buerckstuemmer T."/>
            <person name="Bennett K.L."/>
            <person name="Superti-Furga G."/>
            <person name="Colinge J."/>
        </authorList>
    </citation>
    <scope>IDENTIFICATION BY MASS SPECTROMETRY [LARGE SCALE ANALYSIS]</scope>
</reference>
<reference key="6">
    <citation type="journal article" date="2014" name="J. Proteomics">
        <title>An enzyme assisted RP-RPLC approach for in-depth analysis of human liver phosphoproteome.</title>
        <authorList>
            <person name="Bian Y."/>
            <person name="Song C."/>
            <person name="Cheng K."/>
            <person name="Dong M."/>
            <person name="Wang F."/>
            <person name="Huang J."/>
            <person name="Sun D."/>
            <person name="Wang L."/>
            <person name="Ye M."/>
            <person name="Zou H."/>
        </authorList>
    </citation>
    <scope>IDENTIFICATION BY MASS SPECTROMETRY [LARGE SCALE ANALYSIS]</scope>
    <source>
        <tissue>Liver</tissue>
    </source>
</reference>
<reference key="7">
    <citation type="journal article" date="2023" name="Nucleic Acids Res.">
        <title>Human and bacterial TatD enzymes exhibit apurinic/apyrimidinic (AP) endonuclease activity.</title>
        <authorList>
            <person name="Dorival J."/>
            <person name="Eichman B.F."/>
        </authorList>
    </citation>
    <scope>FUNCTION</scope>
    <scope>CATALYTIC ACTIVITY</scope>
    <scope>COFACTOR</scope>
    <scope>MUTAGENESIS OF GLU-107 AND ASP-218</scope>
    <scope>ACTIVITY REGULATION</scope>
</reference>
<reference key="8">
    <citation type="submission" date="2010-12" db="PDB data bank">
        <title>Crystal structure of the human tatD-domain protein 3 (TATDN3).</title>
        <authorList>
            <consortium name="Structural genomics consortium (SGC)"/>
        </authorList>
    </citation>
    <scope>X-RAY CRYSTALLOGRAPHY (2.5 ANGSTROMS) OF 5-274 IN COMPLEX WITH ZN(2+)</scope>
    <scope>COFACTOR</scope>
</reference>
<name>TATD3_HUMAN</name>
<dbReference type="EC" id="3.1.11.-" evidence="2"/>
<dbReference type="EC" id="3.1.21.-" evidence="2"/>
<dbReference type="EMBL" id="AK293129">
    <property type="protein sequence ID" value="BAH11457.1"/>
    <property type="molecule type" value="mRNA"/>
</dbReference>
<dbReference type="EMBL" id="AK304557">
    <property type="protein sequence ID" value="BAH14214.1"/>
    <property type="molecule type" value="mRNA"/>
</dbReference>
<dbReference type="EMBL" id="AC104333">
    <property type="status" value="NOT_ANNOTATED_CDS"/>
    <property type="molecule type" value="Genomic_DNA"/>
</dbReference>
<dbReference type="EMBL" id="CH471100">
    <property type="protein sequence ID" value="EAW93376.1"/>
    <property type="molecule type" value="Genomic_DNA"/>
</dbReference>
<dbReference type="EMBL" id="CH471100">
    <property type="protein sequence ID" value="EAW93377.1"/>
    <property type="molecule type" value="Genomic_DNA"/>
</dbReference>
<dbReference type="EMBL" id="CH471100">
    <property type="protein sequence ID" value="EAW93378.1"/>
    <property type="molecule type" value="Genomic_DNA"/>
</dbReference>
<dbReference type="EMBL" id="BC048115">
    <property type="protein sequence ID" value="AAH48115.1"/>
    <property type="status" value="ALT_INIT"/>
    <property type="molecule type" value="mRNA"/>
</dbReference>
<dbReference type="EMBL" id="BC113638">
    <property type="protein sequence ID" value="AAI13639.1"/>
    <property type="molecule type" value="mRNA"/>
</dbReference>
<dbReference type="EMBL" id="BC117485">
    <property type="protein sequence ID" value="AAI17486.1"/>
    <property type="molecule type" value="mRNA"/>
</dbReference>
<dbReference type="EMBL" id="BC143956">
    <property type="protein sequence ID" value="AAI43957.1"/>
    <property type="molecule type" value="mRNA"/>
</dbReference>
<dbReference type="CCDS" id="CCDS31019.1">
    <molecule id="Q17R31-1"/>
</dbReference>
<dbReference type="CCDS" id="CCDS41465.1">
    <molecule id="Q17R31-2"/>
</dbReference>
<dbReference type="CCDS" id="CCDS53475.1">
    <molecule id="Q17R31-3"/>
</dbReference>
<dbReference type="CCDS" id="CCDS53476.1">
    <molecule id="Q17R31-5"/>
</dbReference>
<dbReference type="CCDS" id="CCDS53477.1">
    <molecule id="Q17R31-4"/>
</dbReference>
<dbReference type="RefSeq" id="NP_001036017.1">
    <molecule id="Q17R31-1"/>
    <property type="nucleotide sequence ID" value="NM_001042552.3"/>
</dbReference>
<dbReference type="RefSeq" id="NP_001036018.1">
    <molecule id="Q17R31-2"/>
    <property type="nucleotide sequence ID" value="NM_001042553.3"/>
</dbReference>
<dbReference type="RefSeq" id="NP_001139641.1">
    <molecule id="Q17R31-5"/>
    <property type="nucleotide sequence ID" value="NM_001146169.2"/>
</dbReference>
<dbReference type="RefSeq" id="NP_001139642.1">
    <molecule id="Q17R31-4"/>
    <property type="nucleotide sequence ID" value="NM_001146170.2"/>
</dbReference>
<dbReference type="RefSeq" id="NP_001139643.1">
    <molecule id="Q17R31-3"/>
    <property type="nucleotide sequence ID" value="NM_001146171.2"/>
</dbReference>
<dbReference type="PDB" id="2Y1H">
    <property type="method" value="X-ray"/>
    <property type="resolution" value="2.50 A"/>
    <property type="chains" value="A/B=5-274"/>
</dbReference>
<dbReference type="PDBsum" id="2Y1H"/>
<dbReference type="SMR" id="Q17R31"/>
<dbReference type="BioGRID" id="126118">
    <property type="interactions" value="12"/>
</dbReference>
<dbReference type="FunCoup" id="Q17R31">
    <property type="interactions" value="232"/>
</dbReference>
<dbReference type="IntAct" id="Q17R31">
    <property type="interactions" value="9"/>
</dbReference>
<dbReference type="STRING" id="9606.ENSP00000431376"/>
<dbReference type="iPTMnet" id="Q17R31"/>
<dbReference type="PhosphoSitePlus" id="Q17R31"/>
<dbReference type="BioMuta" id="TATDN3"/>
<dbReference type="DMDM" id="121948822"/>
<dbReference type="jPOST" id="Q17R31"/>
<dbReference type="MassIVE" id="Q17R31"/>
<dbReference type="PaxDb" id="9606-ENSP00000431376"/>
<dbReference type="PeptideAtlas" id="Q17R31"/>
<dbReference type="ProteomicsDB" id="21114"/>
<dbReference type="ProteomicsDB" id="22414"/>
<dbReference type="ProteomicsDB" id="32260"/>
<dbReference type="ProteomicsDB" id="61133">
    <molecule id="Q17R31-1"/>
</dbReference>
<dbReference type="ProteomicsDB" id="61134">
    <molecule id="Q17R31-2"/>
</dbReference>
<dbReference type="Pumba" id="Q17R31"/>
<dbReference type="Antibodypedia" id="51781">
    <property type="antibodies" value="30 antibodies from 13 providers"/>
</dbReference>
<dbReference type="DNASU" id="128387"/>
<dbReference type="Ensembl" id="ENST00000366973.8">
    <molecule id="Q17R31-2"/>
    <property type="protein sequence ID" value="ENSP00000355940.4"/>
    <property type="gene ID" value="ENSG00000203705.11"/>
</dbReference>
<dbReference type="Ensembl" id="ENST00000366974.9">
    <molecule id="Q17R31-1"/>
    <property type="protein sequence ID" value="ENSP00000355941.4"/>
    <property type="gene ID" value="ENSG00000203705.11"/>
</dbReference>
<dbReference type="Ensembl" id="ENST00000526641.5">
    <molecule id="Q17R31-4"/>
    <property type="protein sequence ID" value="ENSP00000434801.1"/>
    <property type="gene ID" value="ENSG00000203705.11"/>
</dbReference>
<dbReference type="Ensembl" id="ENST00000531963.5">
    <molecule id="Q17R31-5"/>
    <property type="protein sequence ID" value="ENSP00000433755.1"/>
    <property type="gene ID" value="ENSG00000203705.11"/>
</dbReference>
<dbReference type="Ensembl" id="ENST00000532324.5">
    <molecule id="Q17R31-3"/>
    <property type="protein sequence ID" value="ENSP00000431376.1"/>
    <property type="gene ID" value="ENSG00000203705.11"/>
</dbReference>
<dbReference type="GeneID" id="128387"/>
<dbReference type="KEGG" id="hsa:128387"/>
<dbReference type="MANE-Select" id="ENST00000366974.9">
    <property type="protein sequence ID" value="ENSP00000355941.4"/>
    <property type="RefSeq nucleotide sequence ID" value="NM_001042552.3"/>
    <property type="RefSeq protein sequence ID" value="NP_001036017.1"/>
</dbReference>
<dbReference type="UCSC" id="uc001hjo.3">
    <molecule id="Q17R31-1"/>
    <property type="organism name" value="human"/>
</dbReference>
<dbReference type="AGR" id="HGNC:27010"/>
<dbReference type="CTD" id="128387"/>
<dbReference type="DisGeNET" id="128387"/>
<dbReference type="GeneCards" id="TATDN3"/>
<dbReference type="HGNC" id="HGNC:27010">
    <property type="gene designation" value="TATDN3"/>
</dbReference>
<dbReference type="HPA" id="ENSG00000203705">
    <property type="expression patterns" value="Low tissue specificity"/>
</dbReference>
<dbReference type="neXtProt" id="NX_Q17R31"/>
<dbReference type="OpenTargets" id="ENSG00000203705"/>
<dbReference type="PharmGKB" id="PA142670831"/>
<dbReference type="VEuPathDB" id="HostDB:ENSG00000203705"/>
<dbReference type="eggNOG" id="KOG3020">
    <property type="taxonomic scope" value="Eukaryota"/>
</dbReference>
<dbReference type="GeneTree" id="ENSGT00720000108846"/>
<dbReference type="HOGENOM" id="CLU_031506_5_3_1"/>
<dbReference type="InParanoid" id="Q17R31"/>
<dbReference type="OMA" id="HTHLDMQ"/>
<dbReference type="OrthoDB" id="9521718at2759"/>
<dbReference type="PAN-GO" id="Q17R31">
    <property type="GO annotations" value="0 GO annotations based on evolutionary models"/>
</dbReference>
<dbReference type="PhylomeDB" id="Q17R31"/>
<dbReference type="PathwayCommons" id="Q17R31"/>
<dbReference type="SignaLink" id="Q17R31"/>
<dbReference type="BioGRID-ORCS" id="128387">
    <property type="hits" value="18 hits in 1161 CRISPR screens"/>
</dbReference>
<dbReference type="ChiTaRS" id="TATDN3">
    <property type="organism name" value="human"/>
</dbReference>
<dbReference type="EvolutionaryTrace" id="Q17R31"/>
<dbReference type="GenomeRNAi" id="128387"/>
<dbReference type="Pharos" id="Q17R31">
    <property type="development level" value="Tdark"/>
</dbReference>
<dbReference type="PRO" id="PR:Q17R31"/>
<dbReference type="Proteomes" id="UP000005640">
    <property type="component" value="Chromosome 1"/>
</dbReference>
<dbReference type="RNAct" id="Q17R31">
    <property type="molecule type" value="protein"/>
</dbReference>
<dbReference type="Bgee" id="ENSG00000203705">
    <property type="expression patterns" value="Expressed in left ventricle myocardium and 193 other cell types or tissues"/>
</dbReference>
<dbReference type="ExpressionAtlas" id="Q17R31">
    <property type="expression patterns" value="baseline and differential"/>
</dbReference>
<dbReference type="GO" id="GO:0005739">
    <property type="term" value="C:mitochondrion"/>
    <property type="evidence" value="ECO:0006056"/>
    <property type="project" value="FlyBase"/>
</dbReference>
<dbReference type="GO" id="GO:0005634">
    <property type="term" value="C:nucleus"/>
    <property type="evidence" value="ECO:0007669"/>
    <property type="project" value="UniProtKB-SubCell"/>
</dbReference>
<dbReference type="GO" id="GO:0046872">
    <property type="term" value="F:metal ion binding"/>
    <property type="evidence" value="ECO:0007669"/>
    <property type="project" value="UniProtKB-KW"/>
</dbReference>
<dbReference type="GO" id="GO:0004518">
    <property type="term" value="F:nuclease activity"/>
    <property type="evidence" value="ECO:0007669"/>
    <property type="project" value="UniProtKB-KW"/>
</dbReference>
<dbReference type="CDD" id="cd01310">
    <property type="entry name" value="TatD_DNAse"/>
    <property type="match status" value="1"/>
</dbReference>
<dbReference type="Gene3D" id="3.20.20.140">
    <property type="entry name" value="Metal-dependent hydrolases"/>
    <property type="match status" value="1"/>
</dbReference>
<dbReference type="InterPro" id="IPR032466">
    <property type="entry name" value="Metal_Hydrolase"/>
</dbReference>
<dbReference type="InterPro" id="IPR001130">
    <property type="entry name" value="TatD-like"/>
</dbReference>
<dbReference type="PANTHER" id="PTHR46317:SF7">
    <property type="entry name" value="DEOXYRIBONUCLEASE TATDN3-RELATED"/>
    <property type="match status" value="1"/>
</dbReference>
<dbReference type="PANTHER" id="PTHR46317">
    <property type="entry name" value="HYDROLASE OF PHP SUPERFAMILY-RELATED PROTEIN"/>
    <property type="match status" value="1"/>
</dbReference>
<dbReference type="Pfam" id="PF01026">
    <property type="entry name" value="TatD_DNase"/>
    <property type="match status" value="1"/>
</dbReference>
<dbReference type="PIRSF" id="PIRSF005902">
    <property type="entry name" value="DNase_TatD"/>
    <property type="match status" value="1"/>
</dbReference>
<dbReference type="SUPFAM" id="SSF51556">
    <property type="entry name" value="Metallo-dependent hydrolases"/>
    <property type="match status" value="1"/>
</dbReference>
<comment type="function">
    <text evidence="2">Exhibits 3'-exonuclease activities and apurinic/apyrimidinic (AP) endonuclease (in vitro). Show preferential AP endonuclease activity on double-stranded DNA substrates and 3'- exonuclease activity on single-stranded DNA.</text>
</comment>
<comment type="cofactor">
    <cofactor evidence="2">
        <name>Mn(2+)</name>
        <dbReference type="ChEBI" id="CHEBI:29035"/>
    </cofactor>
    <cofactor evidence="2">
        <name>Ca(2+)</name>
        <dbReference type="ChEBI" id="CHEBI:29108"/>
    </cofactor>
    <cofactor evidence="3">
        <name>Mg(2+)</name>
        <dbReference type="ChEBI" id="CHEBI:18420"/>
    </cofactor>
    <cofactor evidence="2">
        <name>Zn(2+)</name>
        <dbReference type="ChEBI" id="CHEBI:29105"/>
    </cofactor>
    <text evidence="1 2">Binds 2 Zn(2+) per subunit (By similarity). Exhibits AP endonuclease and 3'-exonuclease activities in the presence of Mg(2+) and Mn(2+). In contrast, in the presence of Ca(2+), shows AP endonuclease activity exclusively (PubMed:36881763).</text>
</comment>
<comment type="activity regulation">
    <text evidence="2">The 3'-exonuclease activity is sensitive to the metal ion present in the active site, whereas the AP endodeoxyribonuclease activity is observed in a variety of divalent metal cofactors. 3'-exoxonuclease activity is suppressed in the presence of Ca(2+), Zn(2+) and Ni(2+).</text>
</comment>
<comment type="subcellular location">
    <subcellularLocation>
        <location evidence="6">Nucleus</location>
    </subcellularLocation>
</comment>
<comment type="alternative products">
    <event type="alternative splicing"/>
    <isoform>
        <id>Q17R31-1</id>
        <name>1</name>
        <sequence type="displayed"/>
    </isoform>
    <isoform>
        <id>Q17R31-2</id>
        <name>2</name>
        <sequence type="described" ref="VSP_030048"/>
    </isoform>
    <isoform>
        <id>Q17R31-3</id>
        <name>3</name>
        <sequence type="described" ref="VSP_044448"/>
    </isoform>
    <isoform>
        <id>Q17R31-4</id>
        <name>4</name>
        <sequence type="described" ref="VSP_045263"/>
    </isoform>
    <isoform>
        <id>Q17R31-5</id>
        <name>5</name>
        <sequence type="described" ref="VSP_044448 VSP_045742"/>
    </isoform>
</comment>
<comment type="similarity">
    <text evidence="6">Belongs to the metallo-dependent hydrolases superfamily. TatD-type hydrolase family.</text>
</comment>
<comment type="sequence caution" evidence="6">
    <conflict type="erroneous initiation">
        <sequence resource="EMBL-CDS" id="AAH48115"/>
    </conflict>
    <text>Extended N-terminus.</text>
</comment>
<organism>
    <name type="scientific">Homo sapiens</name>
    <name type="common">Human</name>
    <dbReference type="NCBI Taxonomy" id="9606"/>
    <lineage>
        <taxon>Eukaryota</taxon>
        <taxon>Metazoa</taxon>
        <taxon>Chordata</taxon>
        <taxon>Craniata</taxon>
        <taxon>Vertebrata</taxon>
        <taxon>Euteleostomi</taxon>
        <taxon>Mammalia</taxon>
        <taxon>Eutheria</taxon>
        <taxon>Euarchontoglires</taxon>
        <taxon>Primates</taxon>
        <taxon>Haplorrhini</taxon>
        <taxon>Catarrhini</taxon>
        <taxon>Hominidae</taxon>
        <taxon>Homo</taxon>
    </lineage>
</organism>
<keyword id="KW-0002">3D-structure</keyword>
<keyword id="KW-0025">Alternative splicing</keyword>
<keyword id="KW-0255">Endonuclease</keyword>
<keyword id="KW-0378">Hydrolase</keyword>
<keyword id="KW-0479">Metal-binding</keyword>
<keyword id="KW-0540">Nuclease</keyword>
<keyword id="KW-0539">Nucleus</keyword>
<keyword id="KW-1267">Proteomics identification</keyword>
<keyword id="KW-1185">Reference proteome</keyword>
<keyword id="KW-0862">Zinc</keyword>
<evidence type="ECO:0000250" key="1">
    <source>
        <dbReference type="UniProtKB" id="Q6P1N9"/>
    </source>
</evidence>
<evidence type="ECO:0000269" key="2">
    <source>
    </source>
</evidence>
<evidence type="ECO:0000269" key="3">
    <source ref="8"/>
</evidence>
<evidence type="ECO:0000303" key="4">
    <source>
    </source>
</evidence>
<evidence type="ECO:0000303" key="5">
    <source>
    </source>
</evidence>
<evidence type="ECO:0000305" key="6"/>
<evidence type="ECO:0000312" key="7">
    <source>
        <dbReference type="HGNC" id="HGNC:27010"/>
    </source>
</evidence>
<evidence type="ECO:0007744" key="8">
    <source>
        <dbReference type="PDB" id="2Y1H"/>
    </source>
</evidence>
<evidence type="ECO:0007829" key="9">
    <source>
        <dbReference type="PDB" id="2Y1H"/>
    </source>
</evidence>
<accession>Q17R31</accession>
<accession>A6NGS3</accession>
<accession>B7Z1C1</accession>
<accession>B7Z978</accession>
<accession>B7ZLQ6</accession>
<accession>E9PJE5</accession>
<accession>E9PNH3</accession>
<accession>G3V151</accession>
<accession>Q4G0L1</accession>